<feature type="chain" id="PRO_0000430647" description="O-antigen biosynthesis glycosyltransferase WbnH">
    <location>
        <begin position="1"/>
        <end position="338"/>
    </location>
</feature>
<feature type="strand" evidence="8">
    <location>
        <begin position="2"/>
        <end position="7"/>
    </location>
</feature>
<feature type="strand" evidence="8">
    <location>
        <begin position="12"/>
        <end position="14"/>
    </location>
</feature>
<feature type="helix" evidence="8">
    <location>
        <begin position="15"/>
        <end position="27"/>
    </location>
</feature>
<feature type="turn" evidence="8">
    <location>
        <begin position="28"/>
        <end position="30"/>
    </location>
</feature>
<feature type="strand" evidence="8">
    <location>
        <begin position="31"/>
        <end position="39"/>
    </location>
</feature>
<feature type="helix" evidence="8">
    <location>
        <begin position="42"/>
        <end position="45"/>
    </location>
</feature>
<feature type="strand" evidence="8">
    <location>
        <begin position="50"/>
        <end position="54"/>
    </location>
</feature>
<feature type="helix" evidence="8">
    <location>
        <begin position="56"/>
        <end position="59"/>
    </location>
</feature>
<feature type="helix" evidence="8">
    <location>
        <begin position="64"/>
        <end position="76"/>
    </location>
</feature>
<feature type="strand" evidence="8">
    <location>
        <begin position="81"/>
        <end position="86"/>
    </location>
</feature>
<feature type="helix" evidence="8">
    <location>
        <begin position="87"/>
        <end position="95"/>
    </location>
</feature>
<feature type="helix" evidence="8">
    <location>
        <begin position="96"/>
        <end position="98"/>
    </location>
</feature>
<feature type="strand" evidence="8">
    <location>
        <begin position="102"/>
        <end position="107"/>
    </location>
</feature>
<feature type="helix" evidence="8">
    <location>
        <begin position="109"/>
        <end position="111"/>
    </location>
</feature>
<feature type="helix" evidence="8">
    <location>
        <begin position="122"/>
        <end position="132"/>
    </location>
</feature>
<feature type="strand" evidence="8">
    <location>
        <begin position="136"/>
        <end position="142"/>
    </location>
</feature>
<feature type="helix" evidence="8">
    <location>
        <begin position="143"/>
        <end position="151"/>
    </location>
</feature>
<feature type="helix" evidence="8">
    <location>
        <begin position="157"/>
        <end position="159"/>
    </location>
</feature>
<feature type="strand" evidence="8">
    <location>
        <begin position="160"/>
        <end position="162"/>
    </location>
</feature>
<feature type="strand" evidence="8">
    <location>
        <begin position="181"/>
        <end position="186"/>
    </location>
</feature>
<feature type="helix" evidence="8">
    <location>
        <begin position="194"/>
        <end position="202"/>
    </location>
</feature>
<feature type="strand" evidence="8">
    <location>
        <begin position="207"/>
        <end position="212"/>
    </location>
</feature>
<feature type="turn" evidence="8">
    <location>
        <begin position="224"/>
        <end position="227"/>
    </location>
</feature>
<feature type="strand" evidence="8">
    <location>
        <begin position="231"/>
        <end position="235"/>
    </location>
</feature>
<feature type="helix" evidence="8">
    <location>
        <begin position="243"/>
        <end position="245"/>
    </location>
</feature>
<feature type="strand" evidence="8">
    <location>
        <begin position="247"/>
        <end position="251"/>
    </location>
</feature>
<feature type="helix" evidence="8">
    <location>
        <begin position="260"/>
        <end position="267"/>
    </location>
</feature>
<feature type="strand" evidence="8">
    <location>
        <begin position="272"/>
        <end position="277"/>
    </location>
</feature>
<feature type="helix" evidence="8">
    <location>
        <begin position="280"/>
        <end position="283"/>
    </location>
</feature>
<feature type="strand" evidence="8">
    <location>
        <begin position="285"/>
        <end position="291"/>
    </location>
</feature>
<feature type="helix" evidence="8">
    <location>
        <begin position="295"/>
        <end position="307"/>
    </location>
</feature>
<feature type="helix" evidence="8">
    <location>
        <begin position="309"/>
        <end position="319"/>
    </location>
</feature>
<feature type="turn" evidence="8">
    <location>
        <begin position="320"/>
        <end position="323"/>
    </location>
</feature>
<feature type="helix" evidence="8">
    <location>
        <begin position="325"/>
        <end position="327"/>
    </location>
</feature>
<feature type="helix" evidence="8">
    <location>
        <begin position="329"/>
        <end position="337"/>
    </location>
</feature>
<keyword id="KW-0002">3D-structure</keyword>
<keyword id="KW-0328">Glycosyltransferase</keyword>
<keyword id="KW-0448">Lipopolysaccharide biosynthesis</keyword>
<keyword id="KW-0808">Transferase</keyword>
<organism>
    <name type="scientific">Escherichia coli</name>
    <dbReference type="NCBI Taxonomy" id="562"/>
    <lineage>
        <taxon>Bacteria</taxon>
        <taxon>Pseudomonadati</taxon>
        <taxon>Pseudomonadota</taxon>
        <taxon>Gammaproteobacteria</taxon>
        <taxon>Enterobacterales</taxon>
        <taxon>Enterobacteriaceae</taxon>
        <taxon>Escherichia</taxon>
    </lineage>
</organism>
<protein>
    <recommendedName>
        <fullName evidence="7">O-antigen biosynthesis glycosyltransferase WbnH</fullName>
        <ecNumber evidence="2 3">2.4.1.306</ecNumber>
    </recommendedName>
    <alternativeName>
        <fullName evidence="7">UDP-GalNAc:alpha-D-GalNAc-diphosphoundecaprenol alpha-1,3-N-acetylgalactosaminyltransferase</fullName>
    </alternativeName>
</protein>
<name>WBNH_ECOLX</name>
<accession>P0DMP6</accession>
<accession>Q5J7D6</accession>
<gene>
    <name evidence="4" type="primary">wbnH</name>
    <name evidence="6" type="synonym">wbwH</name>
    <name evidence="5" type="synonym">wcmA</name>
</gene>
<sequence>MKNVGFIVTKSEIGGAQTWVNEISNLIKEECNIFLITSEEGWLTHKDVFAGVFVIPGIKKYFDFLTLFKLRKILKENNISTLIASSANAGVYARLVRLLVDFKCIYVSHGWSCLYNGGRLKSIFCIVEKYLSLLTDVIWCVSKSDEKKAIENIGIKEPKIITVSNSVPQMPRCNNKQLQYKVLFVGRLTHPKRPELLANVISKKPQYSLHIVGGGERLESLKKQFSECENIHFLGEVNNFYNYHEYDLFSLISDSEGLPMSGLEAHTAAIPLLLSDVGGCFELIEGNGLLVENTEDDIGYKLDKIFDDYENYREQAIRASGKFVIENYASAYKSIILG</sequence>
<proteinExistence type="evidence at protein level"/>
<reference key="1">
    <citation type="journal article" date="2005" name="Appl. Environ. Microbiol.">
        <title>Molecular analysis of the O-antigen gene cluster of Escherichia coli O86:B7 and characterization of the chain length determinant gene (wzz).</title>
        <authorList>
            <person name="Guo H."/>
            <person name="Yi W."/>
            <person name="Shao J."/>
            <person name="Lu Y."/>
            <person name="Zhang W."/>
            <person name="Song J."/>
            <person name="Wang P.G."/>
        </authorList>
    </citation>
    <scope>NUCLEOTIDE SEQUENCE [GENOMIC DNA]</scope>
    <source>
        <strain>O86:K61:B7 / ATCC 12701</strain>
    </source>
</reference>
<reference key="2">
    <citation type="journal article" date="2005" name="J. Am. Chem. Soc.">
        <title>Escherichia coli O86 O-antigen biosynthetic gene cluster and stepwise enzymatic synthesis of human blood group B antigen tetrasaccharide.</title>
        <authorList>
            <person name="Yi W."/>
            <person name="Shao J."/>
            <person name="Zhu L."/>
            <person name="Li M."/>
            <person name="Singh M."/>
            <person name="Lu Y."/>
            <person name="Lin S."/>
            <person name="Li H."/>
            <person name="Ryu K."/>
            <person name="Shen J."/>
            <person name="Guo H."/>
            <person name="Yao Q."/>
            <person name="Bush C.A."/>
            <person name="Wang P.G."/>
        </authorList>
    </citation>
    <scope>NUCLEOTIDE SEQUENCE [GENOMIC DNA]</scope>
    <source>
        <strain>O86:K62:H2</strain>
    </source>
</reference>
<reference key="3">
    <citation type="journal article" date="2005" name="Vet. Microbiol.">
        <title>Characterization of Escherichia coli O86 O-antigen gene cluster and identification of O86-specific genes.</title>
        <authorList>
            <person name="Feng L."/>
            <person name="Han W."/>
            <person name="Wang Q."/>
            <person name="Bastin D.A."/>
            <person name="Wang L."/>
        </authorList>
    </citation>
    <scope>NUCLEOTIDE SEQUENCE [GENOMIC DNA]</scope>
    <source>
        <strain>O86</strain>
    </source>
</reference>
<reference key="4">
    <citation type="journal article" date="2006" name="Biochem. Biophys. Res. Commun.">
        <title>The wbnH gene of Escherichia coli O86:H2 encodes an alpha-1,3-N-acetylgalactosaminyl transferase involved in the O-repeating unit biosynthesis.</title>
        <authorList>
            <person name="Yi W."/>
            <person name="Yao Q."/>
            <person name="Zhang Y."/>
            <person name="Motari E."/>
            <person name="Lin S."/>
            <person name="Wang P.G."/>
        </authorList>
    </citation>
    <scope>FUNCTION</scope>
    <scope>CATALYTIC ACTIVITY</scope>
    <scope>PATHWAY</scope>
    <source>
        <strain>O86:H2</strain>
    </source>
</reference>
<reference key="5">
    <citation type="journal article" date="2010" name="Nat. Chem. Biol.">
        <title>In vitro bacterial polysaccharide biosynthesis: defining the functions of Wzy and Wzz.</title>
        <authorList>
            <person name="Woodward R."/>
            <person name="Yi W."/>
            <person name="Li L."/>
            <person name="Zhao G."/>
            <person name="Eguchi H."/>
            <person name="Sridhar P.R."/>
            <person name="Guo H."/>
            <person name="Song J.K."/>
            <person name="Motari E."/>
            <person name="Cai L."/>
            <person name="Kelleher P."/>
            <person name="Liu X."/>
            <person name="Han W."/>
            <person name="Zhang W."/>
            <person name="Ding Y."/>
            <person name="Li M."/>
            <person name="Wang P.G."/>
        </authorList>
    </citation>
    <scope>FUNCTION</scope>
    <scope>CATALYTIC ACTIVITY</scope>
    <scope>PATHWAY</scope>
    <source>
        <strain>O86:K61:B7 / ATCC 12701</strain>
    </source>
</reference>
<evidence type="ECO:0000269" key="1">
    <source>
    </source>
</evidence>
<evidence type="ECO:0000269" key="2">
    <source>
    </source>
</evidence>
<evidence type="ECO:0000269" key="3">
    <source>
    </source>
</evidence>
<evidence type="ECO:0000303" key="4">
    <source>
    </source>
</evidence>
<evidence type="ECO:0000303" key="5">
    <source>
    </source>
</evidence>
<evidence type="ECO:0000303" key="6">
    <source>
    </source>
</evidence>
<evidence type="ECO:0000305" key="7"/>
<evidence type="ECO:0007829" key="8">
    <source>
        <dbReference type="PDB" id="4XYW"/>
    </source>
</evidence>
<dbReference type="EC" id="2.4.1.306" evidence="2 3"/>
<dbReference type="EMBL" id="AY220982">
    <property type="protein sequence ID" value="AAO37709.1"/>
    <property type="molecule type" value="Genomic_DNA"/>
</dbReference>
<dbReference type="EMBL" id="AY667408">
    <property type="protein sequence ID" value="AAV80749.1"/>
    <property type="molecule type" value="Genomic_DNA"/>
</dbReference>
<dbReference type="EMBL" id="AY670704">
    <property type="protein sequence ID" value="AAV85953.1"/>
    <property type="molecule type" value="Genomic_DNA"/>
</dbReference>
<dbReference type="RefSeq" id="WP_000799972.1">
    <property type="nucleotide sequence ID" value="NZ_WSXE01000068.1"/>
</dbReference>
<dbReference type="PDB" id="4XYW">
    <property type="method" value="X-ray"/>
    <property type="resolution" value="2.20 A"/>
    <property type="chains" value="A=1-338"/>
</dbReference>
<dbReference type="PDBsum" id="4XYW"/>
<dbReference type="SMR" id="P0DMP6"/>
<dbReference type="CAZy" id="GT4">
    <property type="family name" value="Glycosyltransferase Family 4"/>
</dbReference>
<dbReference type="KEGG" id="ag:AAV80749"/>
<dbReference type="BioCyc" id="MetaCyc:MONOMER-18063"/>
<dbReference type="UniPathway" id="UPA00281"/>
<dbReference type="EvolutionaryTrace" id="P0DMP6"/>
<dbReference type="GO" id="GO:0016757">
    <property type="term" value="F:glycosyltransferase activity"/>
    <property type="evidence" value="ECO:0007669"/>
    <property type="project" value="UniProtKB-KW"/>
</dbReference>
<dbReference type="GO" id="GO:0009243">
    <property type="term" value="P:O antigen biosynthetic process"/>
    <property type="evidence" value="ECO:0007669"/>
    <property type="project" value="UniProtKB-UniPathway"/>
</dbReference>
<dbReference type="CDD" id="cd03808">
    <property type="entry name" value="GT4_CapM-like"/>
    <property type="match status" value="1"/>
</dbReference>
<dbReference type="Gene3D" id="3.40.50.2000">
    <property type="entry name" value="Glycogen Phosphorylase B"/>
    <property type="match status" value="2"/>
</dbReference>
<dbReference type="InterPro" id="IPR001296">
    <property type="entry name" value="Glyco_trans_1"/>
</dbReference>
<dbReference type="InterPro" id="IPR028098">
    <property type="entry name" value="Glyco_trans_4-like_N"/>
</dbReference>
<dbReference type="PANTHER" id="PTHR12526">
    <property type="entry name" value="GLYCOSYLTRANSFERASE"/>
    <property type="match status" value="1"/>
</dbReference>
<dbReference type="Pfam" id="PF13439">
    <property type="entry name" value="Glyco_transf_4"/>
    <property type="match status" value="1"/>
</dbReference>
<dbReference type="Pfam" id="PF00534">
    <property type="entry name" value="Glycos_transf_1"/>
    <property type="match status" value="1"/>
</dbReference>
<dbReference type="SUPFAM" id="SSF53756">
    <property type="entry name" value="UDP-Glycosyltransferase/glycogen phosphorylase"/>
    <property type="match status" value="1"/>
</dbReference>
<comment type="function">
    <text evidence="2 3">Involved in the assembly of the O-repeating unit during O-antigen biosynthesis.</text>
</comment>
<comment type="catalytic activity">
    <reaction evidence="2 3">
        <text>N-acetyl-alpha-D-galactosaminyl-di-trans,octa-cis-undecaprenyl diphosphate + UDP-N-acetyl-alpha-D-galactosamine = alpha-D-GalNAc-(1-&gt;3)-alpha-D-GalNAc-di-trans,octa-cis-undecaprenyl diphosphate + UDP + H(+)</text>
        <dbReference type="Rhea" id="RHEA:36759"/>
        <dbReference type="ChEBI" id="CHEBI:15378"/>
        <dbReference type="ChEBI" id="CHEBI:58223"/>
        <dbReference type="ChEBI" id="CHEBI:67138"/>
        <dbReference type="ChEBI" id="CHEBI:73987"/>
        <dbReference type="ChEBI" id="CHEBI:74214"/>
        <dbReference type="EC" id="2.4.1.306"/>
    </reaction>
</comment>
<comment type="pathway">
    <text evidence="2 3">Bacterial outer membrane biogenesis; LPS O-antigen biosynthesis.</text>
</comment>
<comment type="miscellaneous">
    <text evidence="1">O86:H2 and O86:B7 subtypes share the same O unit, but the O units are polymerized from different terminal sugars in different glycosidic linkages.</text>
</comment>
<comment type="similarity">
    <text evidence="7">Belongs to the glycosyltransferase group 1 family. Glycosyltransferase 4 subfamily.</text>
</comment>